<feature type="chain" id="PRO_0000079261" description="Protein ENTREP3">
    <location>
        <begin position="1"/>
        <end position="668"/>
    </location>
</feature>
<feature type="transmembrane region" description="Helical" evidence="1">
    <location>
        <begin position="34"/>
        <end position="54"/>
    </location>
</feature>
<feature type="transmembrane region" description="Helical" evidence="1">
    <location>
        <begin position="67"/>
        <end position="87"/>
    </location>
</feature>
<feature type="transmembrane region" description="Helical" evidence="1">
    <location>
        <begin position="91"/>
        <end position="111"/>
    </location>
</feature>
<feature type="transmembrane region" description="Helical" evidence="1">
    <location>
        <begin position="174"/>
        <end position="194"/>
    </location>
</feature>
<feature type="region of interest" description="Disordered" evidence="2">
    <location>
        <begin position="386"/>
        <end position="419"/>
    </location>
</feature>
<feature type="region of interest" description="Disordered" evidence="2">
    <location>
        <begin position="442"/>
        <end position="503"/>
    </location>
</feature>
<feature type="region of interest" description="Disordered" evidence="2">
    <location>
        <begin position="550"/>
        <end position="570"/>
    </location>
</feature>
<feature type="region of interest" description="Disordered" evidence="2">
    <location>
        <begin position="597"/>
        <end position="620"/>
    </location>
</feature>
<feature type="region of interest" description="Disordered" evidence="2">
    <location>
        <begin position="645"/>
        <end position="668"/>
    </location>
</feature>
<feature type="compositionally biased region" description="Low complexity" evidence="2">
    <location>
        <begin position="398"/>
        <end position="407"/>
    </location>
</feature>
<feature type="compositionally biased region" description="Polar residues" evidence="2">
    <location>
        <begin position="655"/>
        <end position="668"/>
    </location>
</feature>
<feature type="modified residue" description="Phosphoserine" evidence="9">
    <location>
        <position position="358"/>
    </location>
</feature>
<feature type="modified residue" description="Phosphoserine" evidence="9">
    <location>
        <position position="389"/>
    </location>
</feature>
<feature type="modified residue" description="Phosphoserine" evidence="9">
    <location>
        <position position="493"/>
    </location>
</feature>
<feature type="modified residue" description="Phosphoserine" evidence="9">
    <location>
        <position position="574"/>
    </location>
</feature>
<feature type="glycosylation site" description="N-linked (GlcNAc...) asparagine" evidence="1">
    <location>
        <position position="160"/>
    </location>
</feature>
<feature type="splice variant" id="VSP_038926" description="In isoform B." evidence="5">
    <location>
        <begin position="76"/>
        <end position="171"/>
    </location>
</feature>
<feature type="splice variant" id="VSP_046728" description="In isoform 2." evidence="5">
    <location>
        <begin position="76"/>
        <end position="94"/>
    </location>
</feature>
<feature type="splice variant" id="VSP_046729" description="In isoform 2 and isoform 3." evidence="5">
    <original>T</original>
    <variation>TQ</variation>
    <location>
        <position position="207"/>
    </location>
</feature>
<feature type="sequence variant" id="VAR_035684" description="In a breast cancer sample; somatic mutation." evidence="3">
    <original>S</original>
    <variation>F</variation>
    <location>
        <position position="358"/>
    </location>
</feature>
<feature type="sequence variant" id="VAR_037876" description="In dbSNP:rs2072648.">
    <original>R</original>
    <variation>H</variation>
    <location>
        <position position="549"/>
    </location>
</feature>
<feature type="sequence variant" id="VAR_056842" description="In dbSNP:rs2072648.">
    <original>R</original>
    <variation>H</variation>
    <location>
        <position position="646"/>
    </location>
</feature>
<dbReference type="EMBL" id="AF023268">
    <property type="protein sequence ID" value="AAC51822.1"/>
    <property type="molecule type" value="Genomic_DNA"/>
</dbReference>
<dbReference type="EMBL" id="AL713999">
    <property type="status" value="NOT_ANNOTATED_CDS"/>
    <property type="molecule type" value="Genomic_DNA"/>
</dbReference>
<dbReference type="EMBL" id="CH471121">
    <property type="protein sequence ID" value="EAW53094.1"/>
    <property type="molecule type" value="Genomic_DNA"/>
</dbReference>
<dbReference type="EMBL" id="CH471121">
    <property type="protein sequence ID" value="EAW53097.1"/>
    <property type="molecule type" value="Genomic_DNA"/>
</dbReference>
<dbReference type="EMBL" id="CH471121">
    <property type="protein sequence ID" value="EAW53098.1"/>
    <property type="molecule type" value="Genomic_DNA"/>
</dbReference>
<dbReference type="EMBL" id="BC040136">
    <property type="protein sequence ID" value="AAH40136.2"/>
    <property type="molecule type" value="mRNA"/>
</dbReference>
<dbReference type="EMBL" id="BC006493">
    <property type="protein sequence ID" value="AAH06493.1"/>
    <property type="molecule type" value="mRNA"/>
</dbReference>
<dbReference type="EMBL" id="BC007444">
    <property type="protein sequence ID" value="AAH07444.1"/>
    <property type="molecule type" value="mRNA"/>
</dbReference>
<dbReference type="EMBL" id="BC010471">
    <property type="protein sequence ID" value="AAH10471.1"/>
    <property type="molecule type" value="mRNA"/>
</dbReference>
<dbReference type="EMBL" id="BC033707">
    <property type="status" value="NOT_ANNOTATED_CDS"/>
    <property type="molecule type" value="mRNA"/>
</dbReference>
<dbReference type="CCDS" id="CCDS1103.1">
    <molecule id="P81408-1"/>
</dbReference>
<dbReference type="CCDS" id="CCDS1104.1">
    <molecule id="P81408-2"/>
</dbReference>
<dbReference type="CCDS" id="CCDS58035.1">
    <molecule id="P81408-3"/>
</dbReference>
<dbReference type="PIR" id="T08827">
    <property type="entry name" value="T08827"/>
</dbReference>
<dbReference type="RefSeq" id="NP_001254537.1">
    <molecule id="P81408-3"/>
    <property type="nucleotide sequence ID" value="NM_001267608.2"/>
</dbReference>
<dbReference type="RefSeq" id="NP_006580.2">
    <molecule id="P81408-1"/>
    <property type="nucleotide sequence ID" value="NM_006589.2"/>
</dbReference>
<dbReference type="RefSeq" id="NP_937995.1">
    <molecule id="P81408-2"/>
    <property type="nucleotide sequence ID" value="NM_198264.2"/>
</dbReference>
<dbReference type="RefSeq" id="XP_005244902.1">
    <molecule id="P81408-4"/>
    <property type="nucleotide sequence ID" value="XM_005244845.3"/>
</dbReference>
<dbReference type="RefSeq" id="XP_054185443.1">
    <molecule id="P81408-4"/>
    <property type="nucleotide sequence ID" value="XM_054329468.1"/>
</dbReference>
<dbReference type="RefSeq" id="XP_054189882.1">
    <molecule id="P81408-4"/>
    <property type="nucleotide sequence ID" value="XM_054333907.1"/>
</dbReference>
<dbReference type="SMR" id="P81408"/>
<dbReference type="BioGRID" id="115938">
    <property type="interactions" value="128"/>
</dbReference>
<dbReference type="FunCoup" id="P81408">
    <property type="interactions" value="711"/>
</dbReference>
<dbReference type="IntAct" id="P81408">
    <property type="interactions" value="102"/>
</dbReference>
<dbReference type="MINT" id="P81408"/>
<dbReference type="STRING" id="9606.ENSP00000354958"/>
<dbReference type="GlyCosmos" id="P81408">
    <property type="glycosylation" value="1 site, No reported glycans"/>
</dbReference>
<dbReference type="GlyGen" id="P81408">
    <property type="glycosylation" value="1 site, 1 N-linked glycan (1 site)"/>
</dbReference>
<dbReference type="iPTMnet" id="P81408"/>
<dbReference type="PhosphoSitePlus" id="P81408"/>
<dbReference type="BioMuta" id="FAM189B"/>
<dbReference type="DMDM" id="294862432"/>
<dbReference type="jPOST" id="P81408"/>
<dbReference type="MassIVE" id="P81408"/>
<dbReference type="PaxDb" id="9606-ENSP00000354958"/>
<dbReference type="PeptideAtlas" id="P81408"/>
<dbReference type="ProteomicsDB" id="3358"/>
<dbReference type="ProteomicsDB" id="57695">
    <molecule id="P81408-1"/>
</dbReference>
<dbReference type="ProteomicsDB" id="57696">
    <molecule id="P81408-2"/>
</dbReference>
<dbReference type="Antibodypedia" id="1675">
    <property type="antibodies" value="74 antibodies from 14 providers"/>
</dbReference>
<dbReference type="DNASU" id="10712"/>
<dbReference type="Ensembl" id="ENST00000350210.6">
    <molecule id="P81408-2"/>
    <property type="protein sequence ID" value="ENSP00000307128.4"/>
    <property type="gene ID" value="ENSG00000160767.23"/>
</dbReference>
<dbReference type="Ensembl" id="ENST00000361361.7">
    <molecule id="P81408-1"/>
    <property type="protein sequence ID" value="ENSP00000354958.2"/>
    <property type="gene ID" value="ENSG00000160767.23"/>
</dbReference>
<dbReference type="Ensembl" id="ENST00000368368.7">
    <molecule id="P81408-3"/>
    <property type="protein sequence ID" value="ENSP00000357352.3"/>
    <property type="gene ID" value="ENSG00000160767.23"/>
</dbReference>
<dbReference type="Ensembl" id="ENST00000572488.5">
    <molecule id="P81408-3"/>
    <property type="protein sequence ID" value="ENSP00000458501.1"/>
    <property type="gene ID" value="ENSG00000262666.5"/>
</dbReference>
<dbReference type="Ensembl" id="ENST00000574749.5">
    <molecule id="P81408-2"/>
    <property type="protein sequence ID" value="ENSP00000460960.1"/>
    <property type="gene ID" value="ENSG00000262666.5"/>
</dbReference>
<dbReference type="Ensembl" id="ENST00000575430.5">
    <molecule id="P81408-1"/>
    <property type="protein sequence ID" value="ENSP00000461152.1"/>
    <property type="gene ID" value="ENSG00000262666.5"/>
</dbReference>
<dbReference type="GeneID" id="10712"/>
<dbReference type="KEGG" id="hsa:10712"/>
<dbReference type="MANE-Select" id="ENST00000361361.7">
    <property type="protein sequence ID" value="ENSP00000354958.2"/>
    <property type="RefSeq nucleotide sequence ID" value="NM_006589.3"/>
    <property type="RefSeq protein sequence ID" value="NP_006580.2"/>
</dbReference>
<dbReference type="UCSC" id="uc001fjm.4">
    <molecule id="P81408-1"/>
    <property type="organism name" value="human"/>
</dbReference>
<dbReference type="AGR" id="HGNC:1233"/>
<dbReference type="CTD" id="10712"/>
<dbReference type="DisGeNET" id="10712"/>
<dbReference type="GeneCards" id="ENTREP3"/>
<dbReference type="HGNC" id="HGNC:1233">
    <property type="gene designation" value="ENTREP3"/>
</dbReference>
<dbReference type="HPA" id="ENSG00000160767">
    <property type="expression patterns" value="Low tissue specificity"/>
</dbReference>
<dbReference type="MIM" id="619447">
    <property type="type" value="gene"/>
</dbReference>
<dbReference type="neXtProt" id="NX_P81408"/>
<dbReference type="OpenTargets" id="ENSG00000160767"/>
<dbReference type="PharmGKB" id="PA25608"/>
<dbReference type="VEuPathDB" id="HostDB:ENSG00000160767"/>
<dbReference type="eggNOG" id="ENOG502RB7D">
    <property type="taxonomic scope" value="Eukaryota"/>
</dbReference>
<dbReference type="GeneTree" id="ENSGT00530000063335"/>
<dbReference type="HOGENOM" id="CLU_025607_0_0_1"/>
<dbReference type="InParanoid" id="P81408"/>
<dbReference type="OMA" id="ICCIQIF"/>
<dbReference type="PAN-GO" id="P81408">
    <property type="GO annotations" value="0 GO annotations based on evolutionary models"/>
</dbReference>
<dbReference type="PhylomeDB" id="P81408"/>
<dbReference type="TreeFam" id="TF332736"/>
<dbReference type="PathwayCommons" id="P81408"/>
<dbReference type="SignaLink" id="P81408"/>
<dbReference type="BioGRID-ORCS" id="10712">
    <property type="hits" value="19 hits in 1162 CRISPR screens"/>
</dbReference>
<dbReference type="ChiTaRS" id="FAM189B">
    <property type="organism name" value="human"/>
</dbReference>
<dbReference type="GenomeRNAi" id="10712"/>
<dbReference type="Pharos" id="P81408">
    <property type="development level" value="Tbio"/>
</dbReference>
<dbReference type="PRO" id="PR:P81408"/>
<dbReference type="Proteomes" id="UP000005640">
    <property type="component" value="Chromosome 1"/>
</dbReference>
<dbReference type="RNAct" id="P81408">
    <property type="molecule type" value="protein"/>
</dbReference>
<dbReference type="Bgee" id="ENSG00000160767">
    <property type="expression patterns" value="Expressed in right hemisphere of cerebellum and 98 other cell types or tissues"/>
</dbReference>
<dbReference type="ExpressionAtlas" id="P81408">
    <property type="expression patterns" value="baseline and differential"/>
</dbReference>
<dbReference type="GO" id="GO:0016020">
    <property type="term" value="C:membrane"/>
    <property type="evidence" value="ECO:0007669"/>
    <property type="project" value="UniProtKB-SubCell"/>
</dbReference>
<dbReference type="GO" id="GO:0050699">
    <property type="term" value="F:WW domain binding"/>
    <property type="evidence" value="ECO:0000353"/>
    <property type="project" value="UniProtKB"/>
</dbReference>
<dbReference type="InterPro" id="IPR007237">
    <property type="entry name" value="CD20-like"/>
</dbReference>
<dbReference type="InterPro" id="IPR030431">
    <property type="entry name" value="ENTREP1-3"/>
</dbReference>
<dbReference type="PANTHER" id="PTHR17615:SF7">
    <property type="entry name" value="PROTEIN ENTREP3"/>
    <property type="match status" value="1"/>
</dbReference>
<dbReference type="PANTHER" id="PTHR17615">
    <property type="entry name" value="PROTEIN FAM189A"/>
    <property type="match status" value="1"/>
</dbReference>
<dbReference type="Pfam" id="PF04103">
    <property type="entry name" value="CD20"/>
    <property type="match status" value="1"/>
</dbReference>
<name>EREP3_HUMAN</name>
<comment type="subunit">
    <text>May interact with WWOX.</text>
</comment>
<comment type="interaction">
    <interactant intactId="EBI-6366314">
        <id>P81408</id>
    </interactant>
    <interactant intactId="EBI-4320739">
        <id>Q9NZC7</id>
        <label>WWOX</label>
    </interactant>
    <organismsDiffer>false</organismsDiffer>
    <experiments>5</experiments>
</comment>
<comment type="subcellular location">
    <subcellularLocation>
        <location evidence="7">Membrane</location>
        <topology evidence="7">Multi-pass membrane protein</topology>
    </subcellularLocation>
</comment>
<comment type="alternative products">
    <event type="alternative splicing"/>
    <isoform>
        <id>P81408-1</id>
        <name>A</name>
        <sequence type="displayed"/>
    </isoform>
    <isoform>
        <id>P81408-2</id>
        <name>B</name>
        <sequence type="described" ref="VSP_038926"/>
    </isoform>
    <isoform>
        <id>P81408-3</id>
        <name>2</name>
        <sequence type="described" ref="VSP_046728 VSP_046729"/>
    </isoform>
    <isoform>
        <id>P81408-4</id>
        <name>3</name>
        <sequence type="described" ref="VSP_046729"/>
    </isoform>
</comment>
<comment type="tissue specificity">
    <text>Widely expressed.</text>
</comment>
<comment type="similarity">
    <text evidence="7">Belongs to the ENTREP family.</text>
</comment>
<organism>
    <name type="scientific">Homo sapiens</name>
    <name type="common">Human</name>
    <dbReference type="NCBI Taxonomy" id="9606"/>
    <lineage>
        <taxon>Eukaryota</taxon>
        <taxon>Metazoa</taxon>
        <taxon>Chordata</taxon>
        <taxon>Craniata</taxon>
        <taxon>Vertebrata</taxon>
        <taxon>Euteleostomi</taxon>
        <taxon>Mammalia</taxon>
        <taxon>Eutheria</taxon>
        <taxon>Euarchontoglires</taxon>
        <taxon>Primates</taxon>
        <taxon>Haplorrhini</taxon>
        <taxon>Catarrhini</taxon>
        <taxon>Hominidae</taxon>
        <taxon>Homo</taxon>
    </lineage>
</organism>
<accession>P81408</accession>
<accession>B1AVS5</accession>
<accession>Q8IXL3</accession>
<accession>Q9BR66</accession>
<keyword id="KW-0025">Alternative splicing</keyword>
<keyword id="KW-0325">Glycoprotein</keyword>
<keyword id="KW-0472">Membrane</keyword>
<keyword id="KW-0597">Phosphoprotein</keyword>
<keyword id="KW-1267">Proteomics identification</keyword>
<keyword id="KW-1185">Reference proteome</keyword>
<keyword id="KW-0812">Transmembrane</keyword>
<keyword id="KW-1133">Transmembrane helix</keyword>
<sequence>MMPSPSDSSRSLTSRPSTRGLTHLRLHRPWLQALLTLGLVQVLLGILVVTFSMVASSVTTTESIKRSCPSWAGFSLAFSGVVGIVSWKRPFTLVISFFSLLSVLCVMLSMAGSVLSCKNAQLARDFQQCSLEGKVCVCCPSVPLLRPCPESGQELKVAPNSTCDEARGALKNLLFSVCGLTICAAIICTLSAIVCCIQIFSLDLVHTLAPERSVSGPLGPLGCTSPPPAPLLHTMLDLEEFVPPVPPPPYYPPEYTCSSETDAQSITYNGSMDSPVPLYPTDCPPSYEAVMGLRGDSQATLFDPQLHDGSCICERVASIVDVSMDSGSLVLSAIGDLPGGSSPSEDSCLLELQGSVRSVDYVLFRSIQRSRAGYCLSLDCGLRGPFEESPLPRRPPRAARSYSCSAPEAPPPLGAPTAARSCHRLEGWPPWVGPCFPELRRRVPRGGGRPAAAPPTRAPTRRFSDSSGSLTPPGHRPPHPASPPPLLLPRSHSDPGITTSSDTADFRDLYTKVLEEEAASVSSADTGLCSEACLFRLARCPSPKLLRARSAEKRRPVPTFQKVPLPSGPAPAHSLGDLKGSWPGRGLVTRFLQISRKAPDPSGTGAHGHKQVPRSLWGRPGRESLHLRSCGDLSSSSSLRRLLSGRRLERGTRPHSLSLNGGSRETGL</sequence>
<reference key="1">
    <citation type="journal article" date="1997" name="Genome Res.">
        <title>Identification of three additional genes contiguous to the glucocerebrosidase locus on chromosome 1q21: implications for Gaucher disease.</title>
        <authorList>
            <person name="Winfield S.L."/>
            <person name="Tayebi N."/>
            <person name="Martin B.M."/>
            <person name="Ginns E.I."/>
            <person name="Sidransky E."/>
        </authorList>
    </citation>
    <scope>NUCLEOTIDE SEQUENCE [GENOMIC DNA] (ISOFORM 3)</scope>
    <source>
        <tissue>Hippocampus</tissue>
    </source>
</reference>
<reference key="2">
    <citation type="journal article" date="2006" name="Nature">
        <title>The DNA sequence and biological annotation of human chromosome 1.</title>
        <authorList>
            <person name="Gregory S.G."/>
            <person name="Barlow K.F."/>
            <person name="McLay K.E."/>
            <person name="Kaul R."/>
            <person name="Swarbreck D."/>
            <person name="Dunham A."/>
            <person name="Scott C.E."/>
            <person name="Howe K.L."/>
            <person name="Woodfine K."/>
            <person name="Spencer C.C.A."/>
            <person name="Jones M.C."/>
            <person name="Gillson C."/>
            <person name="Searle S."/>
            <person name="Zhou Y."/>
            <person name="Kokocinski F."/>
            <person name="McDonald L."/>
            <person name="Evans R."/>
            <person name="Phillips K."/>
            <person name="Atkinson A."/>
            <person name="Cooper R."/>
            <person name="Jones C."/>
            <person name="Hall R.E."/>
            <person name="Andrews T.D."/>
            <person name="Lloyd C."/>
            <person name="Ainscough R."/>
            <person name="Almeida J.P."/>
            <person name="Ambrose K.D."/>
            <person name="Anderson F."/>
            <person name="Andrew R.W."/>
            <person name="Ashwell R.I.S."/>
            <person name="Aubin K."/>
            <person name="Babbage A.K."/>
            <person name="Bagguley C.L."/>
            <person name="Bailey J."/>
            <person name="Beasley H."/>
            <person name="Bethel G."/>
            <person name="Bird C.P."/>
            <person name="Bray-Allen S."/>
            <person name="Brown J.Y."/>
            <person name="Brown A.J."/>
            <person name="Buckley D."/>
            <person name="Burton J."/>
            <person name="Bye J."/>
            <person name="Carder C."/>
            <person name="Chapman J.C."/>
            <person name="Clark S.Y."/>
            <person name="Clarke G."/>
            <person name="Clee C."/>
            <person name="Cobley V."/>
            <person name="Collier R.E."/>
            <person name="Corby N."/>
            <person name="Coville G.J."/>
            <person name="Davies J."/>
            <person name="Deadman R."/>
            <person name="Dunn M."/>
            <person name="Earthrowl M."/>
            <person name="Ellington A.G."/>
            <person name="Errington H."/>
            <person name="Frankish A."/>
            <person name="Frankland J."/>
            <person name="French L."/>
            <person name="Garner P."/>
            <person name="Garnett J."/>
            <person name="Gay L."/>
            <person name="Ghori M.R.J."/>
            <person name="Gibson R."/>
            <person name="Gilby L.M."/>
            <person name="Gillett W."/>
            <person name="Glithero R.J."/>
            <person name="Grafham D.V."/>
            <person name="Griffiths C."/>
            <person name="Griffiths-Jones S."/>
            <person name="Grocock R."/>
            <person name="Hammond S."/>
            <person name="Harrison E.S.I."/>
            <person name="Hart E."/>
            <person name="Haugen E."/>
            <person name="Heath P.D."/>
            <person name="Holmes S."/>
            <person name="Holt K."/>
            <person name="Howden P.J."/>
            <person name="Hunt A.R."/>
            <person name="Hunt S.E."/>
            <person name="Hunter G."/>
            <person name="Isherwood J."/>
            <person name="James R."/>
            <person name="Johnson C."/>
            <person name="Johnson D."/>
            <person name="Joy A."/>
            <person name="Kay M."/>
            <person name="Kershaw J.K."/>
            <person name="Kibukawa M."/>
            <person name="Kimberley A.M."/>
            <person name="King A."/>
            <person name="Knights A.J."/>
            <person name="Lad H."/>
            <person name="Laird G."/>
            <person name="Lawlor S."/>
            <person name="Leongamornlert D.A."/>
            <person name="Lloyd D.M."/>
            <person name="Loveland J."/>
            <person name="Lovell J."/>
            <person name="Lush M.J."/>
            <person name="Lyne R."/>
            <person name="Martin S."/>
            <person name="Mashreghi-Mohammadi M."/>
            <person name="Matthews L."/>
            <person name="Matthews N.S.W."/>
            <person name="McLaren S."/>
            <person name="Milne S."/>
            <person name="Mistry S."/>
            <person name="Moore M.J.F."/>
            <person name="Nickerson T."/>
            <person name="O'Dell C.N."/>
            <person name="Oliver K."/>
            <person name="Palmeiri A."/>
            <person name="Palmer S.A."/>
            <person name="Parker A."/>
            <person name="Patel D."/>
            <person name="Pearce A.V."/>
            <person name="Peck A.I."/>
            <person name="Pelan S."/>
            <person name="Phelps K."/>
            <person name="Phillimore B.J."/>
            <person name="Plumb R."/>
            <person name="Rajan J."/>
            <person name="Raymond C."/>
            <person name="Rouse G."/>
            <person name="Saenphimmachak C."/>
            <person name="Sehra H.K."/>
            <person name="Sheridan E."/>
            <person name="Shownkeen R."/>
            <person name="Sims S."/>
            <person name="Skuce C.D."/>
            <person name="Smith M."/>
            <person name="Steward C."/>
            <person name="Subramanian S."/>
            <person name="Sycamore N."/>
            <person name="Tracey A."/>
            <person name="Tromans A."/>
            <person name="Van Helmond Z."/>
            <person name="Wall M."/>
            <person name="Wallis J.M."/>
            <person name="White S."/>
            <person name="Whitehead S.L."/>
            <person name="Wilkinson J.E."/>
            <person name="Willey D.L."/>
            <person name="Williams H."/>
            <person name="Wilming L."/>
            <person name="Wray P.W."/>
            <person name="Wu Z."/>
            <person name="Coulson A."/>
            <person name="Vaudin M."/>
            <person name="Sulston J.E."/>
            <person name="Durbin R.M."/>
            <person name="Hubbard T."/>
            <person name="Wooster R."/>
            <person name="Dunham I."/>
            <person name="Carter N.P."/>
            <person name="McVean G."/>
            <person name="Ross M.T."/>
            <person name="Harrow J."/>
            <person name="Olson M.V."/>
            <person name="Beck S."/>
            <person name="Rogers J."/>
            <person name="Bentley D.R."/>
        </authorList>
    </citation>
    <scope>NUCLEOTIDE SEQUENCE [LARGE SCALE GENOMIC DNA]</scope>
</reference>
<reference key="3">
    <citation type="submission" date="2005-09" db="EMBL/GenBank/DDBJ databases">
        <authorList>
            <person name="Mural R.J."/>
            <person name="Istrail S."/>
            <person name="Sutton G.G."/>
            <person name="Florea L."/>
            <person name="Halpern A.L."/>
            <person name="Mobarry C.M."/>
            <person name="Lippert R."/>
            <person name="Walenz B."/>
            <person name="Shatkay H."/>
            <person name="Dew I."/>
            <person name="Miller J.R."/>
            <person name="Flanigan M.J."/>
            <person name="Edwards N.J."/>
            <person name="Bolanos R."/>
            <person name="Fasulo D."/>
            <person name="Halldorsson B.V."/>
            <person name="Hannenhalli S."/>
            <person name="Turner R."/>
            <person name="Yooseph S."/>
            <person name="Lu F."/>
            <person name="Nusskern D.R."/>
            <person name="Shue B.C."/>
            <person name="Zheng X.H."/>
            <person name="Zhong F."/>
            <person name="Delcher A.L."/>
            <person name="Huson D.H."/>
            <person name="Kravitz S.A."/>
            <person name="Mouchard L."/>
            <person name="Reinert K."/>
            <person name="Remington K.A."/>
            <person name="Clark A.G."/>
            <person name="Waterman M.S."/>
            <person name="Eichler E.E."/>
            <person name="Adams M.D."/>
            <person name="Hunkapiller M.W."/>
            <person name="Myers E.W."/>
            <person name="Venter J.C."/>
        </authorList>
    </citation>
    <scope>NUCLEOTIDE SEQUENCE [LARGE SCALE GENOMIC DNA]</scope>
</reference>
<reference key="4">
    <citation type="journal article" date="2004" name="Genome Res.">
        <title>The status, quality, and expansion of the NIH full-length cDNA project: the Mammalian Gene Collection (MGC).</title>
        <authorList>
            <consortium name="The MGC Project Team"/>
        </authorList>
    </citation>
    <scope>NUCLEOTIDE SEQUENCE [LARGE SCALE MRNA] (ISOFORMS A; B AND 2)</scope>
    <source>
        <tissue>Brain</tissue>
        <tissue>Lymph</tissue>
        <tissue>Pancreas</tissue>
    </source>
</reference>
<reference key="5">
    <citation type="journal article" date="2004" name="Oncogene">
        <title>WWOX binds the specific proline-rich ligand PPXY: identification of candidate interacting proteins.</title>
        <authorList>
            <person name="Ludes-Meyers J.H."/>
            <person name="Kil H."/>
            <person name="Bednarek A.K."/>
            <person name="Drake J."/>
            <person name="Bedford M.T."/>
            <person name="Aldaz C.M."/>
        </authorList>
    </citation>
    <scope>INTERACTION WITH WWOX</scope>
</reference>
<reference key="6">
    <citation type="journal article" date="2008" name="Proc. Natl. Acad. Sci. U.S.A.">
        <title>A quantitative atlas of mitotic phosphorylation.</title>
        <authorList>
            <person name="Dephoure N."/>
            <person name="Zhou C."/>
            <person name="Villen J."/>
            <person name="Beausoleil S.A."/>
            <person name="Bakalarski C.E."/>
            <person name="Elledge S.J."/>
            <person name="Gygi S.P."/>
        </authorList>
    </citation>
    <scope>IDENTIFICATION BY MASS SPECTROMETRY [LARGE SCALE ANALYSIS]</scope>
    <source>
        <tissue>Cervix carcinoma</tissue>
    </source>
</reference>
<reference key="7">
    <citation type="journal article" date="2013" name="J. Proteome Res.">
        <title>Toward a comprehensive characterization of a human cancer cell phosphoproteome.</title>
        <authorList>
            <person name="Zhou H."/>
            <person name="Di Palma S."/>
            <person name="Preisinger C."/>
            <person name="Peng M."/>
            <person name="Polat A.N."/>
            <person name="Heck A.J."/>
            <person name="Mohammed S."/>
        </authorList>
    </citation>
    <scope>PHOSPHORYLATION [LARGE SCALE ANALYSIS] AT SER-358; SER-389; SER-493 AND SER-574</scope>
    <scope>IDENTIFICATION BY MASS SPECTROMETRY [LARGE SCALE ANALYSIS]</scope>
    <source>
        <tissue>Cervix carcinoma</tissue>
        <tissue>Erythroleukemia</tissue>
    </source>
</reference>
<reference key="8">
    <citation type="journal article" date="2014" name="J. Proteomics">
        <title>An enzyme assisted RP-RPLC approach for in-depth analysis of human liver phosphoproteome.</title>
        <authorList>
            <person name="Bian Y."/>
            <person name="Song C."/>
            <person name="Cheng K."/>
            <person name="Dong M."/>
            <person name="Wang F."/>
            <person name="Huang J."/>
            <person name="Sun D."/>
            <person name="Wang L."/>
            <person name="Ye M."/>
            <person name="Zou H."/>
        </authorList>
    </citation>
    <scope>IDENTIFICATION BY MASS SPECTROMETRY [LARGE SCALE ANALYSIS]</scope>
    <source>
        <tissue>Liver</tissue>
    </source>
</reference>
<reference key="9">
    <citation type="journal article" date="2006" name="Science">
        <title>The consensus coding sequences of human breast and colorectal cancers.</title>
        <authorList>
            <person name="Sjoeblom T."/>
            <person name="Jones S."/>
            <person name="Wood L.D."/>
            <person name="Parsons D.W."/>
            <person name="Lin J."/>
            <person name="Barber T.D."/>
            <person name="Mandelker D."/>
            <person name="Leary R.J."/>
            <person name="Ptak J."/>
            <person name="Silliman N."/>
            <person name="Szabo S."/>
            <person name="Buckhaults P."/>
            <person name="Farrell C."/>
            <person name="Meeh P."/>
            <person name="Markowitz S.D."/>
            <person name="Willis J."/>
            <person name="Dawson D."/>
            <person name="Willson J.K.V."/>
            <person name="Gazdar A.F."/>
            <person name="Hartigan J."/>
            <person name="Wu L."/>
            <person name="Liu C."/>
            <person name="Parmigiani G."/>
            <person name="Park B.H."/>
            <person name="Bachman K.E."/>
            <person name="Papadopoulos N."/>
            <person name="Vogelstein B."/>
            <person name="Kinzler K.W."/>
            <person name="Velculescu V.E."/>
        </authorList>
    </citation>
    <scope>VARIANT [LARGE SCALE ANALYSIS] PHE-358</scope>
</reference>
<gene>
    <name evidence="8" type="primary">ENTREP3</name>
    <name evidence="8" type="synonym">C1orf2</name>
    <name evidence="4 6" type="synonym">COTE1</name>
    <name evidence="8" type="synonym">FAM189B</name>
</gene>
<evidence type="ECO:0000255" key="1"/>
<evidence type="ECO:0000256" key="2">
    <source>
        <dbReference type="SAM" id="MobiDB-lite"/>
    </source>
</evidence>
<evidence type="ECO:0000269" key="3">
    <source>
    </source>
</evidence>
<evidence type="ECO:0000303" key="4">
    <source>
    </source>
</evidence>
<evidence type="ECO:0000303" key="5">
    <source>
    </source>
</evidence>
<evidence type="ECO:0000303" key="6">
    <source>
    </source>
</evidence>
<evidence type="ECO:0000305" key="7"/>
<evidence type="ECO:0000312" key="8">
    <source>
        <dbReference type="HGNC" id="HGNC:1233"/>
    </source>
</evidence>
<evidence type="ECO:0007744" key="9">
    <source>
    </source>
</evidence>
<protein>
    <recommendedName>
        <fullName evidence="7">Protein ENTREP3</fullName>
    </recommendedName>
    <alternativeName>
        <fullName evidence="8">Endosomal transmembrane epsin interactor 3</fullName>
    </alternativeName>
    <alternativeName>
        <fullName evidence="4">Protein COTE1</fullName>
    </alternativeName>
</protein>
<proteinExistence type="evidence at protein level"/>